<gene>
    <name evidence="1" type="primary">M</name>
    <name type="synonym">M2</name>
</gene>
<feature type="chain" id="PRO_0000372915" description="Matrix protein 2">
    <location>
        <begin position="1"/>
        <end position="96" status="greater than"/>
    </location>
</feature>
<feature type="topological domain" description="Virion surface" evidence="1">
    <location>
        <begin position="1"/>
        <end position="22"/>
    </location>
</feature>
<feature type="transmembrane region" description="Helical; Signal-anchor for type III membrane protein" evidence="1">
    <location>
        <begin position="23"/>
        <end position="43"/>
    </location>
</feature>
<feature type="topological domain" description="Intravirion" evidence="1">
    <location>
        <begin position="44"/>
        <end position="96"/>
    </location>
</feature>
<feature type="region of interest" description="Disordered" evidence="2">
    <location>
        <begin position="61"/>
        <end position="88"/>
    </location>
</feature>
<feature type="compositionally biased region" description="Basic and acidic residues" evidence="2">
    <location>
        <begin position="71"/>
        <end position="80"/>
    </location>
</feature>
<feature type="site" description="Essential for channel activity, possibly by being protonated during channel activation, and by forming the channel gate and the selective filter" evidence="1">
    <location>
        <position position="37"/>
    </location>
</feature>
<feature type="site" description="Seems to be involved in pH gating" evidence="1">
    <location>
        <position position="41"/>
    </location>
</feature>
<feature type="modified residue" description="Phosphoserine; by host" evidence="1">
    <location>
        <position position="64"/>
    </location>
</feature>
<feature type="modified residue" description="Phosphoserine; by host" evidence="1">
    <location>
        <position position="93"/>
    </location>
</feature>
<feature type="glycosylation site" description="N-linked (GlcNAc...) asparagine; by host" evidence="1">
    <location>
        <position position="20"/>
    </location>
</feature>
<feature type="disulfide bond" description="Interchain (with C-17)" evidence="1">
    <location>
        <position position="17"/>
    </location>
</feature>
<feature type="disulfide bond" description="Interchain (with C-19)" evidence="1">
    <location>
        <position position="19"/>
    </location>
</feature>
<feature type="non-terminal residue">
    <location>
        <position position="96"/>
    </location>
</feature>
<evidence type="ECO:0000255" key="1">
    <source>
        <dbReference type="HAMAP-Rule" id="MF_04069"/>
    </source>
</evidence>
<evidence type="ECO:0000256" key="2">
    <source>
        <dbReference type="SAM" id="MobiDB-lite"/>
    </source>
</evidence>
<organism>
    <name type="scientific">Influenza A virus (strain A/New Zealand:South Canterbury/35/2000 H1N1)</name>
    <dbReference type="NCBI Taxonomy" id="363066"/>
    <lineage>
        <taxon>Viruses</taxon>
        <taxon>Riboviria</taxon>
        <taxon>Orthornavirae</taxon>
        <taxon>Negarnaviricota</taxon>
        <taxon>Polyploviricotina</taxon>
        <taxon>Insthoviricetes</taxon>
        <taxon>Articulavirales</taxon>
        <taxon>Orthomyxoviridae</taxon>
        <taxon>Alphainfluenzavirus</taxon>
        <taxon>Alphainfluenzavirus influenzae</taxon>
        <taxon>Influenza A virus</taxon>
    </lineage>
</organism>
<proteinExistence type="inferred from homology"/>
<comment type="function">
    <text evidence="1">Forms a proton-selective ion channel that is necessary for the efficient release of the viral genome during virus entry. After attaching to the cell surface, the virion enters the cell by endocytosis. Acidification of the endosome triggers M2 ion channel activity. The influx of protons into virion interior is believed to disrupt interactions between the viral ribonucleoprotein (RNP), matrix protein 1 (M1), and lipid bilayers, thereby freeing the viral genome from interaction with viral proteins and enabling RNA segments to migrate to the host cell nucleus, where influenza virus RNA transcription and replication occur. Also plays a role in viral proteins secretory pathway. Elevates the intravesicular pH of normally acidic compartments, such as trans-Golgi network, preventing newly formed hemagglutinin from premature switching to the fusion-active conformation.</text>
</comment>
<comment type="activity regulation">
    <text>The M2 protein from most influenza A strains is inhibited by amantadine and rimantadine, resulting in viral uncoating incapacity. Emergence of amantadine-resistant variants is usually rapid.</text>
</comment>
<comment type="subunit">
    <text evidence="1">Homotetramer; composed of two disulfide-linked dimers held together by non-covalent interactions. May interact with matrix protein 1.</text>
</comment>
<comment type="subcellular location">
    <subcellularLocation>
        <location evidence="1">Virion membrane</location>
    </subcellularLocation>
    <subcellularLocation>
        <location evidence="1">Host apical cell membrane</location>
        <topology evidence="1">Single-pass type III membrane protein</topology>
    </subcellularLocation>
    <text evidence="1">Abundantly expressed at the apical plasma membrane in infected polarized epithelial cells, in close proximity to budding and assembled virions. Minor component of virions (only 16-20 molecules/virion).</text>
</comment>
<comment type="alternative products">
    <event type="alternative splicing"/>
    <isoform>
        <id>Q289M6-1</id>
        <name>M2</name>
        <sequence type="displayed"/>
    </isoform>
    <isoform>
        <id>Q289M5-1</id>
        <name>M1</name>
        <sequence type="external"/>
    </isoform>
    <text>Only the first 9 residues are shared by the 2 isoforms.</text>
</comment>
<comment type="domain">
    <text evidence="1">Cytoplasmic tail plays an important role in virion assembly and morphogenesis.</text>
</comment>
<comment type="miscellaneous">
    <text>When the channel is activated, one or more imidazole moieties of His-37 probably become bi-protonated.</text>
</comment>
<comment type="similarity">
    <text evidence="1">Belongs to the influenza viruses matrix protein M2 family.</text>
</comment>
<sequence length="96" mass="10929">MSLLTEVETPIRNEWGCRCNDSSDPLVVAASIIGIVHLILWIIDRLFSKSIYRIFKHGLKRGPSTEGVPESMREEYREEQQNAVDADDGHFVSIEL</sequence>
<reference key="1">
    <citation type="submission" date="2006-03" db="EMBL/GenBank/DDBJ databases">
        <title>The NIAID influenza genome sequencing project.</title>
        <authorList>
            <person name="Ghedin E."/>
            <person name="Spiro D."/>
            <person name="Sengamalay N."/>
            <person name="Zaborsky J."/>
            <person name="Feldblyum T."/>
            <person name="Subbu V."/>
            <person name="Sparenborg J."/>
            <person name="Groveman L."/>
            <person name="Halpin R."/>
            <person name="Shumway M."/>
            <person name="Sitz J."/>
            <person name="Katzel D."/>
            <person name="Koo H."/>
            <person name="Salzberg S.L."/>
            <person name="Jennings L."/>
            <person name="Smit M."/>
            <person name="Wells V."/>
            <person name="Bao Y."/>
            <person name="Bolotov P."/>
            <person name="Dernovoy D."/>
            <person name="Kiryutin B."/>
            <person name="Lipman D.J."/>
            <person name="Tatusova T."/>
        </authorList>
    </citation>
    <scope>NUCLEOTIDE SEQUENCE [GENOMIC RNA]</scope>
</reference>
<reference key="2">
    <citation type="submission" date="2006-03" db="EMBL/GenBank/DDBJ databases">
        <authorList>
            <consortium name="The NIAID Influenza Genome Sequencing Consortium"/>
        </authorList>
    </citation>
    <scope>NUCLEOTIDE SEQUENCE [GENOMIC RNA]</scope>
</reference>
<dbReference type="EMBL" id="CY009205">
    <property type="protein sequence ID" value="ABD61520.1"/>
    <property type="molecule type" value="Genomic_RNA"/>
</dbReference>
<dbReference type="SMR" id="Q289M6"/>
<dbReference type="GlyCosmos" id="Q289M6">
    <property type="glycosylation" value="1 site, No reported glycans"/>
</dbReference>
<dbReference type="Proteomes" id="UP001366552">
    <property type="component" value="Genome"/>
</dbReference>
<dbReference type="GO" id="GO:0020002">
    <property type="term" value="C:host cell plasma membrane"/>
    <property type="evidence" value="ECO:0007669"/>
    <property type="project" value="UniProtKB-SubCell"/>
</dbReference>
<dbReference type="GO" id="GO:0016020">
    <property type="term" value="C:membrane"/>
    <property type="evidence" value="ECO:0007669"/>
    <property type="project" value="UniProtKB-KW"/>
</dbReference>
<dbReference type="GO" id="GO:0055036">
    <property type="term" value="C:virion membrane"/>
    <property type="evidence" value="ECO:0007669"/>
    <property type="project" value="UniProtKB-SubCell"/>
</dbReference>
<dbReference type="GO" id="GO:0015267">
    <property type="term" value="F:channel activity"/>
    <property type="evidence" value="ECO:0007669"/>
    <property type="project" value="UniProtKB-KW"/>
</dbReference>
<dbReference type="GO" id="GO:0015078">
    <property type="term" value="F:proton transmembrane transporter activity"/>
    <property type="evidence" value="ECO:0007669"/>
    <property type="project" value="InterPro"/>
</dbReference>
<dbReference type="GO" id="GO:0140321">
    <property type="term" value="P:symbiont-mediated suppression of host autophagy"/>
    <property type="evidence" value="ECO:0007669"/>
    <property type="project" value="UniProtKB-KW"/>
</dbReference>
<dbReference type="Gene3D" id="6.10.250.1640">
    <property type="match status" value="1"/>
</dbReference>
<dbReference type="HAMAP" id="MF_04069">
    <property type="entry name" value="INFV_M2"/>
    <property type="match status" value="1"/>
</dbReference>
<dbReference type="InterPro" id="IPR002089">
    <property type="entry name" value="Flu_M2"/>
</dbReference>
<dbReference type="Pfam" id="PF00599">
    <property type="entry name" value="Flu_M2"/>
    <property type="match status" value="1"/>
</dbReference>
<name>M2_I00A1</name>
<accession>Q289M6</accession>
<protein>
    <recommendedName>
        <fullName evidence="1">Matrix protein 2</fullName>
    </recommendedName>
    <alternativeName>
        <fullName evidence="1">Proton channel protein M2</fullName>
    </alternativeName>
</protein>
<organismHost>
    <name type="scientific">Aves</name>
    <dbReference type="NCBI Taxonomy" id="8782"/>
</organismHost>
<organismHost>
    <name type="scientific">Homo sapiens</name>
    <name type="common">Human</name>
    <dbReference type="NCBI Taxonomy" id="9606"/>
</organismHost>
<organismHost>
    <name type="scientific">Sus scrofa</name>
    <name type="common">Pig</name>
    <dbReference type="NCBI Taxonomy" id="9823"/>
</organismHost>
<keyword id="KW-0025">Alternative splicing</keyword>
<keyword id="KW-1015">Disulfide bond</keyword>
<keyword id="KW-0325">Glycoprotein</keyword>
<keyword id="KW-1032">Host cell membrane</keyword>
<keyword id="KW-1043">Host membrane</keyword>
<keyword id="KW-0945">Host-virus interaction</keyword>
<keyword id="KW-0375">Hydrogen ion transport</keyword>
<keyword id="KW-1083">Inhibition of host autophagy by virus</keyword>
<keyword id="KW-0407">Ion channel</keyword>
<keyword id="KW-0406">Ion transport</keyword>
<keyword id="KW-0449">Lipoprotein</keyword>
<keyword id="KW-0472">Membrane</keyword>
<keyword id="KW-0564">Palmitate</keyword>
<keyword id="KW-0597">Phosphoprotein</keyword>
<keyword id="KW-0735">Signal-anchor</keyword>
<keyword id="KW-0812">Transmembrane</keyword>
<keyword id="KW-1133">Transmembrane helix</keyword>
<keyword id="KW-0813">Transport</keyword>
<keyword id="KW-1182">Viral ion channel</keyword>
<keyword id="KW-0946">Virion</keyword>